<keyword id="KW-0001">2Fe-2S</keyword>
<keyword id="KW-0249">Electron transport</keyword>
<keyword id="KW-0408">Iron</keyword>
<keyword id="KW-0411">Iron-sulfur</keyword>
<keyword id="KW-0479">Metal-binding</keyword>
<keyword id="KW-0496">Mitochondrion</keyword>
<keyword id="KW-1185">Reference proteome</keyword>
<keyword id="KW-0809">Transit peptide</keyword>
<keyword id="KW-0813">Transport</keyword>
<comment type="function">
    <text evidence="2 3">Electron donor, of the core iron-sulfur cluster (ISC) assembly complex, that acts to reduce the persulfide into sulfide during [2Fe-2S] clusters assembly on the scaffolding protein ISCU (By similarity). The core iron-sulfur cluster (ISC) assembly complex is involved in the de novo synthesis of a [2Fe-2S] cluster, the first step of the mitochondrial iron-sulfur protein biogenesis. This process is initiated by the cysteine desulfurase complex (NFS1:LYRM4:NDUFAB1) that produces persulfide which is delivered on the scaffold protein ISCU in a FXN-dependent manner. Then this complex is stabilized by FDX2 which provides reducing equivalents to accomplish the [2Fe-2S] cluster assembly. Finally, the [2Fe-2S] cluster is transferred from ISCU to chaperone proteins, including HSCB, HSPA9 and GLRX5 (By similarity). Essential for coenzyme Q biosynthesis: together with FDXR, transfers the electrons required for the hydroxylation reaction performed by COQ6 (By similarity).</text>
</comment>
<comment type="cofactor">
    <cofactor evidence="2">
        <name>[2Fe-2S] cluster</name>
        <dbReference type="ChEBI" id="CHEBI:190135"/>
    </cofactor>
    <text evidence="2">Binds 1 [2Fe-2S] cluster.</text>
</comment>
<comment type="subunit">
    <text evidence="2">Component of the mitochondrial core iron-sulfur cluster (ISC) complex composed of NFS1, LYRM4, NDUFAB1, ISCU, FXN, and FDX2; this complex is a heterohexamer containing two copies of each monomer.</text>
</comment>
<comment type="subcellular location">
    <subcellularLocation>
        <location evidence="2">Mitochondrion</location>
    </subcellularLocation>
    <subcellularLocation>
        <location evidence="1">Mitochondrion matrix</location>
    </subcellularLocation>
</comment>
<comment type="similarity">
    <text evidence="7">Belongs to the adrenodoxin/putidaredoxin family.</text>
</comment>
<protein>
    <recommendedName>
        <fullName evidence="2">Ferredoxin-2, mitochondrial</fullName>
    </recommendedName>
    <alternativeName>
        <fullName>Adrenodoxin-like protein</fullName>
    </alternativeName>
    <alternativeName>
        <fullName>Ferredoxin-1-like protein</fullName>
    </alternativeName>
</protein>
<sequence>MAVFLLKRGVWASLMIGGFGPRAVLFSKLGQNHARLSQATPEKLETSNEEEGSSSAQITAGVESDAENQRAELSEETVEVVFLDRSGQRIPVKGKVGESVLCLAHRYNIELEGACESSLACSTCHVYVNTEYFHKLPEPDEREDDMLDMAPLLQENSRLGCQIILTKQLNGAEFTLPKITRNFYVDGHVPKPH</sequence>
<accession>Q5FWQ0</accession>
<reference key="1">
    <citation type="submission" date="2005-01" db="EMBL/GenBank/DDBJ databases">
        <authorList>
            <consortium name="NIH - Xenopus Gene Collection (XGC) project"/>
        </authorList>
    </citation>
    <scope>NUCLEOTIDE SEQUENCE [LARGE SCALE MRNA]</scope>
    <source>
        <tissue>Egg</tissue>
    </source>
</reference>
<name>FDX2_XENLA</name>
<dbReference type="EMBL" id="BC089254">
    <property type="protein sequence ID" value="AAH89254.1"/>
    <property type="molecule type" value="mRNA"/>
</dbReference>
<dbReference type="RefSeq" id="NP_001089982.1">
    <property type="nucleotide sequence ID" value="NM_001096513.1"/>
</dbReference>
<dbReference type="SMR" id="Q5FWQ0"/>
<dbReference type="DNASU" id="735053"/>
<dbReference type="GeneID" id="735053"/>
<dbReference type="KEGG" id="xla:735053"/>
<dbReference type="AGR" id="Xenbase:XB-GENE-5933715"/>
<dbReference type="CTD" id="735053"/>
<dbReference type="Xenbase" id="XB-GENE-5933715">
    <property type="gene designation" value="fdx2.L"/>
</dbReference>
<dbReference type="OrthoDB" id="268593at2759"/>
<dbReference type="Proteomes" id="UP000186698">
    <property type="component" value="Chromosome 1L"/>
</dbReference>
<dbReference type="Bgee" id="735053">
    <property type="expression patterns" value="Expressed in egg cell and 19 other cell types or tissues"/>
</dbReference>
<dbReference type="GO" id="GO:0005759">
    <property type="term" value="C:mitochondrial matrix"/>
    <property type="evidence" value="ECO:0007669"/>
    <property type="project" value="UniProtKB-SubCell"/>
</dbReference>
<dbReference type="GO" id="GO:0005739">
    <property type="term" value="C:mitochondrion"/>
    <property type="evidence" value="ECO:0000318"/>
    <property type="project" value="GO_Central"/>
</dbReference>
<dbReference type="GO" id="GO:0051537">
    <property type="term" value="F:2 iron, 2 sulfur cluster binding"/>
    <property type="evidence" value="ECO:0007669"/>
    <property type="project" value="UniProtKB-KW"/>
</dbReference>
<dbReference type="GO" id="GO:0009055">
    <property type="term" value="F:electron transfer activity"/>
    <property type="evidence" value="ECO:0000250"/>
    <property type="project" value="UniProtKB"/>
</dbReference>
<dbReference type="GO" id="GO:0046872">
    <property type="term" value="F:metal ion binding"/>
    <property type="evidence" value="ECO:0007669"/>
    <property type="project" value="UniProtKB-KW"/>
</dbReference>
<dbReference type="GO" id="GO:0044571">
    <property type="term" value="P:[2Fe-2S] cluster assembly"/>
    <property type="evidence" value="ECO:0000250"/>
    <property type="project" value="UniProtKB"/>
</dbReference>
<dbReference type="GO" id="GO:0044572">
    <property type="term" value="P:[4Fe-4S] cluster assembly"/>
    <property type="evidence" value="ECO:0000250"/>
    <property type="project" value="UniProtKB"/>
</dbReference>
<dbReference type="GO" id="GO:0022900">
    <property type="term" value="P:electron transport chain"/>
    <property type="evidence" value="ECO:0000318"/>
    <property type="project" value="GO_Central"/>
</dbReference>
<dbReference type="GO" id="GO:0140647">
    <property type="term" value="P:P450-containing electron transport chain"/>
    <property type="evidence" value="ECO:0007669"/>
    <property type="project" value="InterPro"/>
</dbReference>
<dbReference type="GO" id="GO:0006744">
    <property type="term" value="P:ubiquinone biosynthetic process"/>
    <property type="evidence" value="ECO:0000250"/>
    <property type="project" value="UniProtKB"/>
</dbReference>
<dbReference type="CDD" id="cd00207">
    <property type="entry name" value="fer2"/>
    <property type="match status" value="1"/>
</dbReference>
<dbReference type="FunFam" id="3.10.20.30:FF:000013">
    <property type="entry name" value="Adrenodoxin, mitochondrial"/>
    <property type="match status" value="1"/>
</dbReference>
<dbReference type="Gene3D" id="3.10.20.30">
    <property type="match status" value="1"/>
</dbReference>
<dbReference type="InterPro" id="IPR036010">
    <property type="entry name" value="2Fe-2S_ferredoxin-like_sf"/>
</dbReference>
<dbReference type="InterPro" id="IPR001041">
    <property type="entry name" value="2Fe-2S_ferredoxin-type"/>
</dbReference>
<dbReference type="InterPro" id="IPR001055">
    <property type="entry name" value="Adrenodoxin-like"/>
</dbReference>
<dbReference type="InterPro" id="IPR018298">
    <property type="entry name" value="Adrenodoxin_Fe-S_BS"/>
</dbReference>
<dbReference type="InterPro" id="IPR012675">
    <property type="entry name" value="Beta-grasp_dom_sf"/>
</dbReference>
<dbReference type="PANTHER" id="PTHR23426:SF65">
    <property type="entry name" value="FERREDOXIN-2, MITOCHONDRIAL"/>
    <property type="match status" value="1"/>
</dbReference>
<dbReference type="PANTHER" id="PTHR23426">
    <property type="entry name" value="FERREDOXIN/ADRENODOXIN"/>
    <property type="match status" value="1"/>
</dbReference>
<dbReference type="Pfam" id="PF00111">
    <property type="entry name" value="Fer2"/>
    <property type="match status" value="1"/>
</dbReference>
<dbReference type="PRINTS" id="PR00355">
    <property type="entry name" value="ADRENODOXIN"/>
</dbReference>
<dbReference type="SUPFAM" id="SSF54292">
    <property type="entry name" value="2Fe-2S ferredoxin-like"/>
    <property type="match status" value="1"/>
</dbReference>
<dbReference type="PROSITE" id="PS51085">
    <property type="entry name" value="2FE2S_FER_2"/>
    <property type="match status" value="1"/>
</dbReference>
<dbReference type="PROSITE" id="PS00814">
    <property type="entry name" value="ADX"/>
    <property type="match status" value="1"/>
</dbReference>
<gene>
    <name evidence="2" type="primary">fdx2</name>
    <name type="synonym">fdx1l</name>
</gene>
<evidence type="ECO:0000250" key="1">
    <source>
        <dbReference type="UniProtKB" id="P10109"/>
    </source>
</evidence>
<evidence type="ECO:0000250" key="2">
    <source>
        <dbReference type="UniProtKB" id="Q6P4F2"/>
    </source>
</evidence>
<evidence type="ECO:0000250" key="3">
    <source>
        <dbReference type="UniProtKB" id="Q9H1K1"/>
    </source>
</evidence>
<evidence type="ECO:0000255" key="4"/>
<evidence type="ECO:0000255" key="5">
    <source>
        <dbReference type="PROSITE-ProRule" id="PRU00465"/>
    </source>
</evidence>
<evidence type="ECO:0000256" key="6">
    <source>
        <dbReference type="SAM" id="MobiDB-lite"/>
    </source>
</evidence>
<evidence type="ECO:0000305" key="7"/>
<feature type="transit peptide" description="Mitochondrion" evidence="4">
    <location>
        <begin position="1"/>
        <end status="unknown"/>
    </location>
</feature>
<feature type="chain" id="PRO_0000325955" description="Ferredoxin-2, mitochondrial">
    <location>
        <begin status="unknown"/>
        <end position="193"/>
    </location>
</feature>
<feature type="domain" description="2Fe-2S ferredoxin-type" evidence="5">
    <location>
        <begin position="78"/>
        <end position="180"/>
    </location>
</feature>
<feature type="region of interest" description="Disordered" evidence="6">
    <location>
        <begin position="38"/>
        <end position="70"/>
    </location>
</feature>
<feature type="binding site" evidence="5">
    <location>
        <position position="115"/>
    </location>
    <ligand>
        <name>[2Fe-2S] cluster</name>
        <dbReference type="ChEBI" id="CHEBI:190135"/>
    </ligand>
</feature>
<feature type="binding site" evidence="5">
    <location>
        <position position="121"/>
    </location>
    <ligand>
        <name>[2Fe-2S] cluster</name>
        <dbReference type="ChEBI" id="CHEBI:190135"/>
    </ligand>
</feature>
<feature type="binding site" evidence="5">
    <location>
        <position position="124"/>
    </location>
    <ligand>
        <name>[2Fe-2S] cluster</name>
        <dbReference type="ChEBI" id="CHEBI:190135"/>
    </ligand>
</feature>
<feature type="binding site" evidence="5">
    <location>
        <position position="161"/>
    </location>
    <ligand>
        <name>[2Fe-2S] cluster</name>
        <dbReference type="ChEBI" id="CHEBI:190135"/>
    </ligand>
</feature>
<proteinExistence type="evidence at transcript level"/>
<organism>
    <name type="scientific">Xenopus laevis</name>
    <name type="common">African clawed frog</name>
    <dbReference type="NCBI Taxonomy" id="8355"/>
    <lineage>
        <taxon>Eukaryota</taxon>
        <taxon>Metazoa</taxon>
        <taxon>Chordata</taxon>
        <taxon>Craniata</taxon>
        <taxon>Vertebrata</taxon>
        <taxon>Euteleostomi</taxon>
        <taxon>Amphibia</taxon>
        <taxon>Batrachia</taxon>
        <taxon>Anura</taxon>
        <taxon>Pipoidea</taxon>
        <taxon>Pipidae</taxon>
        <taxon>Xenopodinae</taxon>
        <taxon>Xenopus</taxon>
        <taxon>Xenopus</taxon>
    </lineage>
</organism>